<name>S26A4_MOUSE</name>
<sequence length="780" mass="85687">MAARGGRSEPPQLAEYSCSYTVSRPVYSELAFQQQRERRLPERRTLRDSLARSCSCSRKRAFGVVKTLLPILDWLPKYRVKEWLLSDIISGVSTGLVGTLQGMAYALLAAVPVQFGLYSAFFPILTYFVFGTSRHISVGPFPVVSLMVGSVVLSMAPDDHFLVPSGNGSALNSTTLDTGTRDAARVLLASTLTLLVGIIQLVFGGLQIGFIVRYLADPLVGGFTTAAAFQVLVSQLKIVLNVSTKNYNGILSIIYTLIEIFQNIGDTNIADFIAGLLTIIVCMAVKELNDRFKHRIPVPIPIEVIVTIIATAISYGANLEKNYNAGIVKSIPSGFLPPVLPSVGLFSDMLAASFSIAVVAYAIAVSVGKVYATKHDYVIDGNQEFIAFGISNVFSGFFSCFVATTALSRTAVQESTGGKTQVAGLISAVIVMVAIVALGRLLEPLQKSVLAAVVIANLKGMFMQVCDVPRLWKQNKTDAVIWVFTCIMSIILGLDLGLLAGLLFALLTVVLRVQFPSWNGLGSVPSTDIYKSITHYKNLEEPEGVKILRFSSPIFYGNVDGFKKCINSTVGFDAIRVYNKRLKALRRIQKLIKKGQLRATKNGIISDIGSSNNAFEPDEDVEEPEELNIPTKEIEIQVDWNSELPVKVNVPKVPIHSLVLDCGAVSFLDVVGVRSLRMIVKEFQRIDVNVYFALLQDDVLEKMEQCGFFDDNIRKDRFFLTVHDAILHLQNQVKSREGQDSLLETVARIRDCKDPLDLMEAEMNAEELDVQDEAMRRLAS</sequence>
<keyword id="KW-0002">3D-structure</keyword>
<keyword id="KW-1003">Cell membrane</keyword>
<keyword id="KW-0868">Chloride</keyword>
<keyword id="KW-0472">Membrane</keyword>
<keyword id="KW-1185">Reference proteome</keyword>
<keyword id="KW-0812">Transmembrane</keyword>
<keyword id="KW-1133">Transmembrane helix</keyword>
<keyword id="KW-0813">Transport</keyword>
<protein>
    <recommendedName>
        <fullName>Pendrin</fullName>
    </recommendedName>
    <alternativeName>
        <fullName>Sodium-independent chloride/iodide transporter</fullName>
    </alternativeName>
    <alternativeName>
        <fullName>Solute carrier family 26 member 4</fullName>
    </alternativeName>
</protein>
<feature type="chain" id="PRO_0000080165" description="Pendrin">
    <location>
        <begin position="1"/>
        <end position="780"/>
    </location>
</feature>
<feature type="topological domain" description="Cytoplasmic" evidence="3">
    <location>
        <begin position="1"/>
        <end position="87"/>
    </location>
</feature>
<feature type="transmembrane region" description="Helical" evidence="3">
    <location>
        <begin position="88"/>
        <end position="108"/>
    </location>
</feature>
<feature type="topological domain" description="Extracellular" evidence="3">
    <location>
        <position position="109"/>
    </location>
</feature>
<feature type="transmembrane region" description="Helical" evidence="3">
    <location>
        <begin position="110"/>
        <end position="130"/>
    </location>
</feature>
<feature type="topological domain" description="Cytoplasmic" evidence="3">
    <location>
        <begin position="131"/>
        <end position="135"/>
    </location>
</feature>
<feature type="transmembrane region" description="Helical" evidence="3">
    <location>
        <begin position="136"/>
        <end position="156"/>
    </location>
</feature>
<feature type="topological domain" description="Extracellular" evidence="3">
    <location>
        <begin position="157"/>
        <end position="191"/>
    </location>
</feature>
<feature type="transmembrane region" description="Helical" evidence="3">
    <location>
        <begin position="192"/>
        <end position="212"/>
    </location>
</feature>
<feature type="topological domain" description="Cytoplasmic" evidence="3">
    <location>
        <begin position="213"/>
        <end position="218"/>
    </location>
</feature>
<feature type="transmembrane region" description="Helical" evidence="3">
    <location>
        <begin position="219"/>
        <end position="239"/>
    </location>
</feature>
<feature type="topological domain" description="Extracellular" evidence="3">
    <location>
        <begin position="240"/>
        <end position="263"/>
    </location>
</feature>
<feature type="transmembrane region" description="Helical" evidence="3">
    <location>
        <begin position="264"/>
        <end position="284"/>
    </location>
</feature>
<feature type="topological domain" description="Cytoplasmic" evidence="3">
    <location>
        <begin position="285"/>
        <end position="295"/>
    </location>
</feature>
<feature type="transmembrane region" description="Helical" evidence="3">
    <location>
        <begin position="296"/>
        <end position="316"/>
    </location>
</feature>
<feature type="topological domain" description="Extracellular" evidence="3">
    <location>
        <begin position="317"/>
        <end position="344"/>
    </location>
</feature>
<feature type="transmembrane region" description="Helical" evidence="3">
    <location>
        <begin position="345"/>
        <end position="365"/>
    </location>
</feature>
<feature type="topological domain" description="Cytoplasmic" evidence="3">
    <location>
        <begin position="366"/>
        <end position="384"/>
    </location>
</feature>
<feature type="transmembrane region" description="Helical" evidence="3">
    <location>
        <begin position="385"/>
        <end position="405"/>
    </location>
</feature>
<feature type="topological domain" description="Extracellular" evidence="3">
    <location>
        <begin position="406"/>
        <end position="421"/>
    </location>
</feature>
<feature type="transmembrane region" description="Helical" evidence="3">
    <location>
        <begin position="422"/>
        <end position="442"/>
    </location>
</feature>
<feature type="topological domain" description="Cytoplasmic" evidence="3">
    <location>
        <begin position="443"/>
        <end position="448"/>
    </location>
</feature>
<feature type="transmembrane region" description="Helical" evidence="3">
    <location>
        <begin position="449"/>
        <end position="469"/>
    </location>
</feature>
<feature type="topological domain" description="Extracellular" evidence="3">
    <location>
        <begin position="470"/>
        <end position="486"/>
    </location>
</feature>
<feature type="transmembrane region" description="Helical" evidence="3">
    <location>
        <begin position="487"/>
        <end position="507"/>
    </location>
</feature>
<feature type="topological domain" description="Cytoplasmic" evidence="3">
    <location>
        <begin position="508"/>
        <end position="780"/>
    </location>
</feature>
<feature type="domain" description="STAS" evidence="4">
    <location>
        <begin position="535"/>
        <end position="729"/>
    </location>
</feature>
<feature type="strand" evidence="11">
    <location>
        <begin position="19"/>
        <end position="25"/>
    </location>
</feature>
<feature type="helix" evidence="11">
    <location>
        <begin position="30"/>
        <end position="33"/>
    </location>
</feature>
<feature type="strand" evidence="11">
    <location>
        <begin position="34"/>
        <end position="36"/>
    </location>
</feature>
<feature type="helix" evidence="11">
    <location>
        <begin position="46"/>
        <end position="53"/>
    </location>
</feature>
<feature type="helix" evidence="11">
    <location>
        <begin position="58"/>
        <end position="68"/>
    </location>
</feature>
<feature type="helix" evidence="11">
    <location>
        <begin position="71"/>
        <end position="74"/>
    </location>
</feature>
<feature type="turn" evidence="11">
    <location>
        <begin position="75"/>
        <end position="77"/>
    </location>
</feature>
<feature type="helix" evidence="11">
    <location>
        <begin position="80"/>
        <end position="105"/>
    </location>
</feature>
<feature type="turn" evidence="11">
    <location>
        <begin position="106"/>
        <end position="110"/>
    </location>
</feature>
<feature type="helix" evidence="11">
    <location>
        <begin position="113"/>
        <end position="119"/>
    </location>
</feature>
<feature type="helix" evidence="11">
    <location>
        <begin position="122"/>
        <end position="126"/>
    </location>
</feature>
<feature type="helix" evidence="11">
    <location>
        <begin position="142"/>
        <end position="155"/>
    </location>
</feature>
<feature type="helix" evidence="11">
    <location>
        <begin position="158"/>
        <end position="160"/>
    </location>
</feature>
<feature type="strand" evidence="11">
    <location>
        <begin position="169"/>
        <end position="171"/>
    </location>
</feature>
<feature type="helix" evidence="11">
    <location>
        <begin position="180"/>
        <end position="205"/>
    </location>
</feature>
<feature type="helix" evidence="11">
    <location>
        <begin position="210"/>
        <end position="214"/>
    </location>
</feature>
<feature type="helix" evidence="11">
    <location>
        <begin position="217"/>
        <end position="240"/>
    </location>
</feature>
<feature type="strand" evidence="11">
    <location>
        <begin position="249"/>
        <end position="251"/>
    </location>
</feature>
<feature type="helix" evidence="11">
    <location>
        <begin position="252"/>
        <end position="262"/>
    </location>
</feature>
<feature type="strand" evidence="12">
    <location>
        <begin position="264"/>
        <end position="266"/>
    </location>
</feature>
<feature type="helix" evidence="11">
    <location>
        <begin position="269"/>
        <end position="291"/>
    </location>
</feature>
<feature type="turn" evidence="11">
    <location>
        <begin position="293"/>
        <end position="295"/>
    </location>
</feature>
<feature type="helix" evidence="11">
    <location>
        <begin position="302"/>
        <end position="316"/>
    </location>
</feature>
<feature type="turn" evidence="11">
    <location>
        <begin position="317"/>
        <end position="322"/>
    </location>
</feature>
<feature type="turn" evidence="11">
    <location>
        <begin position="347"/>
        <end position="349"/>
    </location>
</feature>
<feature type="helix" evidence="11">
    <location>
        <begin position="350"/>
        <end position="373"/>
    </location>
</feature>
<feature type="turn" evidence="11">
    <location>
        <begin position="374"/>
        <end position="376"/>
    </location>
</feature>
<feature type="helix" evidence="11">
    <location>
        <begin position="381"/>
        <end position="396"/>
    </location>
</feature>
<feature type="turn" evidence="11">
    <location>
        <begin position="397"/>
        <end position="399"/>
    </location>
</feature>
<feature type="helix" evidence="11">
    <location>
        <begin position="407"/>
        <end position="416"/>
    </location>
</feature>
<feature type="helix" evidence="11">
    <location>
        <begin position="422"/>
        <end position="436"/>
    </location>
</feature>
<feature type="turn" evidence="11">
    <location>
        <begin position="437"/>
        <end position="439"/>
    </location>
</feature>
<feature type="turn" evidence="11">
    <location>
        <begin position="441"/>
        <end position="444"/>
    </location>
</feature>
<feature type="helix" evidence="11">
    <location>
        <begin position="447"/>
        <end position="457"/>
    </location>
</feature>
<feature type="helix" evidence="11">
    <location>
        <begin position="459"/>
        <end position="462"/>
    </location>
</feature>
<feature type="helix" evidence="11">
    <location>
        <begin position="463"/>
        <end position="467"/>
    </location>
</feature>
<feature type="helix" evidence="11">
    <location>
        <begin position="468"/>
        <end position="473"/>
    </location>
</feature>
<feature type="helix" evidence="11">
    <location>
        <begin position="476"/>
        <end position="491"/>
    </location>
</feature>
<feature type="helix" evidence="11">
    <location>
        <begin position="495"/>
        <end position="514"/>
    </location>
</feature>
<feature type="turn" evidence="11">
    <location>
        <begin position="533"/>
        <end position="535"/>
    </location>
</feature>
<feature type="strand" evidence="11">
    <location>
        <begin position="536"/>
        <end position="538"/>
    </location>
</feature>
<feature type="strand" evidence="11">
    <location>
        <begin position="543"/>
        <end position="549"/>
    </location>
</feature>
<feature type="strand" evidence="11">
    <location>
        <begin position="556"/>
        <end position="558"/>
    </location>
</feature>
<feature type="helix" evidence="11">
    <location>
        <begin position="559"/>
        <end position="570"/>
    </location>
</feature>
<feature type="helix" evidence="11">
    <location>
        <begin position="574"/>
        <end position="594"/>
    </location>
</feature>
<feature type="strand" evidence="11">
    <location>
        <begin position="657"/>
        <end position="661"/>
    </location>
</feature>
<feature type="helix" evidence="11">
    <location>
        <begin position="671"/>
        <end position="685"/>
    </location>
</feature>
<feature type="strand" evidence="11">
    <location>
        <begin position="689"/>
        <end position="693"/>
    </location>
</feature>
<feature type="helix" evidence="11">
    <location>
        <begin position="697"/>
        <end position="705"/>
    </location>
</feature>
<feature type="strand" evidence="11">
    <location>
        <begin position="711"/>
        <end position="713"/>
    </location>
</feature>
<feature type="helix" evidence="11">
    <location>
        <begin position="715"/>
        <end position="717"/>
    </location>
</feature>
<feature type="helix" evidence="11">
    <location>
        <begin position="722"/>
        <end position="735"/>
    </location>
</feature>
<organism>
    <name type="scientific">Mus musculus</name>
    <name type="common">Mouse</name>
    <dbReference type="NCBI Taxonomy" id="10090"/>
    <lineage>
        <taxon>Eukaryota</taxon>
        <taxon>Metazoa</taxon>
        <taxon>Chordata</taxon>
        <taxon>Craniata</taxon>
        <taxon>Vertebrata</taxon>
        <taxon>Euteleostomi</taxon>
        <taxon>Mammalia</taxon>
        <taxon>Eutheria</taxon>
        <taxon>Euarchontoglires</taxon>
        <taxon>Glires</taxon>
        <taxon>Rodentia</taxon>
        <taxon>Myomorpha</taxon>
        <taxon>Muroidea</taxon>
        <taxon>Muridae</taxon>
        <taxon>Murinae</taxon>
        <taxon>Mus</taxon>
        <taxon>Mus</taxon>
    </lineage>
</organism>
<reference key="1">
    <citation type="journal article" date="1999" name="Proc. Natl. Acad. Sci. U.S.A.">
        <title>Expression pattern of the mouse ortholog of the Pendred's syndrome gene (Pds) suggests a key role for pendrin in the inner ear.</title>
        <authorList>
            <person name="Everett L.A."/>
            <person name="Morsli H."/>
            <person name="Wu D.K."/>
            <person name="Green E.D."/>
        </authorList>
    </citation>
    <scope>NUCLEOTIDE SEQUENCE [MRNA]</scope>
    <scope>TISSUE SPECIFICITY</scope>
    <source>
        <strain>BALB/cJ</strain>
    </source>
</reference>
<reference key="2">
    <citation type="journal article" date="2001" name="Proc. Natl. Acad. Sci. U.S.A.">
        <title>Pendrin, encoded by the Pendred syndrome gene, resides in the apical region of renal intercalated cells and mediates bicarbonate secretion.</title>
        <authorList>
            <person name="Royaux I.E."/>
            <person name="Wall S.M."/>
            <person name="Karniski L.P."/>
            <person name="Everett L.A."/>
            <person name="Suzuki K."/>
            <person name="Knepper M.A."/>
            <person name="Green E.D."/>
        </authorList>
    </citation>
    <scope>FUNCTION</scope>
    <scope>TRANSPORTER ACTIVITY</scope>
    <scope>SUBCELLULAR LOCATION</scope>
    <scope>TISSUE SPECIFICITY</scope>
</reference>
<reference key="3">
    <citation type="journal article" date="2001" name="Proc. Natl. Acad. Sci. U.S.A.">
        <title>Identification of a chloride-formate exchanger expressed on the brush border membrane of renal proximal tubule cells.</title>
        <authorList>
            <person name="Knauf F."/>
            <person name="Yang C.L."/>
            <person name="Thomson R.B."/>
            <person name="Mentone S.A."/>
            <person name="Giebisch G."/>
            <person name="Aronson P.S."/>
        </authorList>
    </citation>
    <scope>SUBCELLULAR LOCATION</scope>
</reference>
<reference key="4">
    <citation type="journal article" date="2008" name="J. Physiol. (Lond.)">
        <title>The Slc26a4 transporter functions as an electroneutral Cl-/I-/HCO3- exchanger: role of Slc26a4 and Slc26a6 in I- and HCO3- secretion and in regulation of CFTR in the parotid duct.</title>
        <authorList>
            <person name="Shcheynikov N."/>
            <person name="Yang D."/>
            <person name="Wang Y."/>
            <person name="Zeng W."/>
            <person name="Karniski L.P."/>
            <person name="So I."/>
            <person name="Wall S.M."/>
            <person name="Muallem S."/>
        </authorList>
    </citation>
    <scope>FUNCTION</scope>
    <scope>TRANSPORTER ACTIVITY</scope>
    <scope>SUBCELLULAR LOCATION</scope>
    <scope>TISSUE SPECIFICITY</scope>
</reference>
<reference key="5">
    <citation type="journal article" date="2010" name="Cell">
        <title>A tissue-specific atlas of mouse protein phosphorylation and expression.</title>
        <authorList>
            <person name="Huttlin E.L."/>
            <person name="Jedrychowski M.P."/>
            <person name="Elias J.E."/>
            <person name="Goswami T."/>
            <person name="Rad R."/>
            <person name="Beausoleil S.A."/>
            <person name="Villen J."/>
            <person name="Haas W."/>
            <person name="Sowa M.E."/>
            <person name="Gygi S.P."/>
        </authorList>
    </citation>
    <scope>IDENTIFICATION BY MASS SPECTROMETRY [LARGE SCALE ANALYSIS]</scope>
    <source>
        <tissue>Kidney</tissue>
    </source>
</reference>
<reference key="6">
    <citation type="journal article" date="2022" name="Front. Mol. Biosci.">
        <title>Identification of IQGAP1 as a SLC26A4 (Pendrin)-Binding Protein in the Kidney.</title>
        <authorList>
            <person name="Xu J."/>
            <person name="Barone S."/>
            <person name="Varasteh Kia M."/>
            <person name="Holliday L.S."/>
            <person name="Zahedi K."/>
            <person name="Soleimani M."/>
        </authorList>
    </citation>
    <scope>SUBCELLULAR LOCATION</scope>
    <scope>TISSUE SPECIFICITY</scope>
    <scope>INTERACTION WITH IQGAP1</scope>
</reference>
<gene>
    <name type="primary">Slc26a4</name>
    <name type="synonym">Pds</name>
</gene>
<comment type="function">
    <text evidence="2 6 8">Sodium-independent transporter of chloride and iodide (By similarity). Mediates electroneutral iodide-chloride, iodide-bicarbonate and chloride-bicarbonate exchange with 1:1 stoichiometry (PubMed:11274445, PubMed:18565999). Mediates elctroneutral chloride-formate exchange (By similarity).</text>
</comment>
<comment type="catalytic activity">
    <reaction evidence="2">
        <text>chloride(in) = chloride(out)</text>
        <dbReference type="Rhea" id="RHEA:29823"/>
        <dbReference type="ChEBI" id="CHEBI:17996"/>
    </reaction>
    <physiologicalReaction direction="right-to-left" evidence="2">
        <dbReference type="Rhea" id="RHEA:29825"/>
    </physiologicalReaction>
</comment>
<comment type="catalytic activity">
    <reaction evidence="2">
        <text>iodide(out) = iodide(in)</text>
        <dbReference type="Rhea" id="RHEA:66324"/>
        <dbReference type="ChEBI" id="CHEBI:16382"/>
    </reaction>
    <physiologicalReaction direction="left-to-right" evidence="2">
        <dbReference type="Rhea" id="RHEA:66325"/>
    </physiologicalReaction>
    <physiologicalReaction direction="right-to-left" evidence="2">
        <dbReference type="Rhea" id="RHEA:66326"/>
    </physiologicalReaction>
</comment>
<comment type="catalytic activity">
    <reaction evidence="6 8">
        <text>hydrogencarbonate(in) + chloride(out) = hydrogencarbonate(out) + chloride(in)</text>
        <dbReference type="Rhea" id="RHEA:72363"/>
        <dbReference type="ChEBI" id="CHEBI:17544"/>
        <dbReference type="ChEBI" id="CHEBI:17996"/>
    </reaction>
</comment>
<comment type="catalytic activity">
    <reaction evidence="8">
        <text>iodide(in) + hydrogencarbonate(out) = iodide(out) + hydrogencarbonate(in)</text>
        <dbReference type="Rhea" id="RHEA:72375"/>
        <dbReference type="ChEBI" id="CHEBI:16382"/>
        <dbReference type="ChEBI" id="CHEBI:17544"/>
    </reaction>
</comment>
<comment type="catalytic activity">
    <reaction evidence="8">
        <text>iodide(in) + chloride(out) = iodide(out) + chloride(in)</text>
        <dbReference type="Rhea" id="RHEA:72379"/>
        <dbReference type="ChEBI" id="CHEBI:16382"/>
        <dbReference type="ChEBI" id="CHEBI:17996"/>
    </reaction>
</comment>
<comment type="catalytic activity">
    <reaction evidence="2">
        <text>formate(in) + chloride(out) = formate(out) + chloride(in)</text>
        <dbReference type="Rhea" id="RHEA:72267"/>
        <dbReference type="ChEBI" id="CHEBI:15740"/>
        <dbReference type="ChEBI" id="CHEBI:17996"/>
    </reaction>
</comment>
<comment type="subunit">
    <text evidence="1 9">Interacts with IQGAP1 (PubMed:35601831). This interaction enhances the chloride-bicarbonate exchange activity of SLC26A4 (By similarity).</text>
</comment>
<comment type="subcellular location">
    <subcellularLocation>
        <location evidence="6 7 8 9">Apical cell membrane</location>
        <topology evidence="3">Multi-pass membrane protein</topology>
    </subcellularLocation>
    <subcellularLocation>
        <location evidence="7">Cell membrane</location>
        <topology evidence="7">Multi-pass membrane protein</topology>
    </subcellularLocation>
    <text evidence="6">Localizes to the apical brush border of cells in the cortical collecting ducts of the kidney.</text>
</comment>
<comment type="tissue specificity">
    <text evidence="5 6 8 9">Highly expressed in the kidney (at protein level) (PubMed:11274445, PubMed:35601831). Throughout the endolymphatic duct and sac, in distinct areas of the utricle and saccule, and in the external sulcus region within the cochlea (PubMed:10449762). Expressed in the parotid gland (PubMed:18565999).</text>
</comment>
<comment type="similarity">
    <text evidence="10">Belongs to the SLC26A/SulP transporter (TC 2.A.53) family.</text>
</comment>
<evidence type="ECO:0000250" key="1">
    <source>
        <dbReference type="UniProtKB" id="O43511"/>
    </source>
</evidence>
<evidence type="ECO:0000250" key="2">
    <source>
        <dbReference type="UniProtKB" id="Q9R154"/>
    </source>
</evidence>
<evidence type="ECO:0000255" key="3"/>
<evidence type="ECO:0000255" key="4">
    <source>
        <dbReference type="PROSITE-ProRule" id="PRU00198"/>
    </source>
</evidence>
<evidence type="ECO:0000269" key="5">
    <source>
    </source>
</evidence>
<evidence type="ECO:0000269" key="6">
    <source>
    </source>
</evidence>
<evidence type="ECO:0000269" key="7">
    <source>
    </source>
</evidence>
<evidence type="ECO:0000269" key="8">
    <source>
    </source>
</evidence>
<evidence type="ECO:0000269" key="9">
    <source>
    </source>
</evidence>
<evidence type="ECO:0000305" key="10"/>
<evidence type="ECO:0007829" key="11">
    <source>
        <dbReference type="PDB" id="7WK1"/>
    </source>
</evidence>
<evidence type="ECO:0007829" key="12">
    <source>
        <dbReference type="PDB" id="7WL2"/>
    </source>
</evidence>
<proteinExistence type="evidence at protein level"/>
<dbReference type="EMBL" id="AF167411">
    <property type="protein sequence ID" value="AAD51617.1"/>
    <property type="molecule type" value="mRNA"/>
</dbReference>
<dbReference type="CCDS" id="CCDS36429.1"/>
<dbReference type="RefSeq" id="NP_035997.1">
    <property type="nucleotide sequence ID" value="NM_011867.4"/>
</dbReference>
<dbReference type="RefSeq" id="XP_006515154.1">
    <property type="nucleotide sequence ID" value="XM_006515091.1"/>
</dbReference>
<dbReference type="RefSeq" id="XP_006515155.1">
    <property type="nucleotide sequence ID" value="XM_006515092.5"/>
</dbReference>
<dbReference type="RefSeq" id="XP_017170557.1">
    <property type="nucleotide sequence ID" value="XM_017315068.1"/>
</dbReference>
<dbReference type="PDB" id="7WK1">
    <property type="method" value="EM"/>
    <property type="resolution" value="3.25 A"/>
    <property type="chains" value="A/B=1-780"/>
</dbReference>
<dbReference type="PDB" id="7WK7">
    <property type="method" value="EM"/>
    <property type="resolution" value="3.49 A"/>
    <property type="chains" value="A/B=1-780"/>
</dbReference>
<dbReference type="PDB" id="7WL2">
    <property type="method" value="EM"/>
    <property type="resolution" value="3.25 A"/>
    <property type="chains" value="A/B=1-780"/>
</dbReference>
<dbReference type="PDB" id="7WL7">
    <property type="method" value="EM"/>
    <property type="resolution" value="3.51 A"/>
    <property type="chains" value="A/B=1-780"/>
</dbReference>
<dbReference type="PDB" id="7WL8">
    <property type="method" value="EM"/>
    <property type="resolution" value="3.40 A"/>
    <property type="chains" value="A/B=1-780"/>
</dbReference>
<dbReference type="PDB" id="7WL9">
    <property type="method" value="EM"/>
    <property type="resolution" value="3.78 A"/>
    <property type="chains" value="A/B=1-780"/>
</dbReference>
<dbReference type="PDB" id="7WLA">
    <property type="method" value="EM"/>
    <property type="resolution" value="3.76 A"/>
    <property type="chains" value="A/B=1-780"/>
</dbReference>
<dbReference type="PDB" id="7WLB">
    <property type="method" value="EM"/>
    <property type="resolution" value="4.10 A"/>
    <property type="chains" value="A/B=1-780"/>
</dbReference>
<dbReference type="PDB" id="7WLE">
    <property type="method" value="EM"/>
    <property type="resolution" value="3.62 A"/>
    <property type="chains" value="A/B=1-780"/>
</dbReference>
<dbReference type="PDB" id="8HZN">
    <property type="method" value="EM"/>
    <property type="resolution" value="3.25 A"/>
    <property type="chains" value="A/B=1-780"/>
</dbReference>
<dbReference type="PDBsum" id="7WK1"/>
<dbReference type="PDBsum" id="7WK7"/>
<dbReference type="PDBsum" id="7WL2"/>
<dbReference type="PDBsum" id="7WL7"/>
<dbReference type="PDBsum" id="7WL8"/>
<dbReference type="PDBsum" id="7WL9"/>
<dbReference type="PDBsum" id="7WLA"/>
<dbReference type="PDBsum" id="7WLB"/>
<dbReference type="PDBsum" id="7WLE"/>
<dbReference type="PDBsum" id="8HZN"/>
<dbReference type="EMDB" id="EMD-32555"/>
<dbReference type="EMDB" id="EMD-32561"/>
<dbReference type="EMDB" id="EMD-32574"/>
<dbReference type="EMDB" id="EMD-32576"/>
<dbReference type="EMDB" id="EMD-32577"/>
<dbReference type="EMDB" id="EMD-32578"/>
<dbReference type="EMDB" id="EMD-32579"/>
<dbReference type="EMDB" id="EMD-32580"/>
<dbReference type="EMDB" id="EMD-32583"/>
<dbReference type="EMDB" id="EMD-35089"/>
<dbReference type="SMR" id="Q9R155"/>
<dbReference type="BioGRID" id="204837">
    <property type="interactions" value="1"/>
</dbReference>
<dbReference type="FunCoup" id="Q9R155">
    <property type="interactions" value="93"/>
</dbReference>
<dbReference type="STRING" id="10090.ENSMUSP00000001253"/>
<dbReference type="BindingDB" id="Q9R155"/>
<dbReference type="ChEMBL" id="CHEMBL4523483"/>
<dbReference type="TCDB" id="2.A.53.2.4">
    <property type="family name" value="the sulfate permease (sulp) family"/>
</dbReference>
<dbReference type="iPTMnet" id="Q9R155"/>
<dbReference type="PhosphoSitePlus" id="Q9R155"/>
<dbReference type="jPOST" id="Q9R155"/>
<dbReference type="PaxDb" id="10090-ENSMUSP00000001253"/>
<dbReference type="ProteomicsDB" id="260894"/>
<dbReference type="Antibodypedia" id="31372">
    <property type="antibodies" value="148 antibodies from 24 providers"/>
</dbReference>
<dbReference type="DNASU" id="23985"/>
<dbReference type="Ensembl" id="ENSMUST00000001253.8">
    <property type="protein sequence ID" value="ENSMUSP00000001253.8"/>
    <property type="gene ID" value="ENSMUSG00000020651.9"/>
</dbReference>
<dbReference type="GeneID" id="23985"/>
<dbReference type="KEGG" id="mmu:23985"/>
<dbReference type="UCSC" id="uc007nho.1">
    <property type="organism name" value="mouse"/>
</dbReference>
<dbReference type="AGR" id="MGI:1346029"/>
<dbReference type="CTD" id="5172"/>
<dbReference type="MGI" id="MGI:1346029">
    <property type="gene designation" value="Slc26a4"/>
</dbReference>
<dbReference type="VEuPathDB" id="HostDB:ENSMUSG00000020651"/>
<dbReference type="eggNOG" id="KOG0236">
    <property type="taxonomic scope" value="Eukaryota"/>
</dbReference>
<dbReference type="GeneTree" id="ENSGT01070000253775"/>
<dbReference type="HOGENOM" id="CLU_003182_9_4_1"/>
<dbReference type="InParanoid" id="Q9R155"/>
<dbReference type="OMA" id="IVCMAVK"/>
<dbReference type="OrthoDB" id="288203at2759"/>
<dbReference type="PhylomeDB" id="Q9R155"/>
<dbReference type="TreeFam" id="TF313784"/>
<dbReference type="Reactome" id="R-MMU-427601">
    <property type="pathway name" value="Multifunctional anion exchangers"/>
</dbReference>
<dbReference type="BioGRID-ORCS" id="23985">
    <property type="hits" value="1 hit in 76 CRISPR screens"/>
</dbReference>
<dbReference type="ChiTaRS" id="Slc26a4">
    <property type="organism name" value="mouse"/>
</dbReference>
<dbReference type="PRO" id="PR:Q9R155"/>
<dbReference type="Proteomes" id="UP000000589">
    <property type="component" value="Chromosome 12"/>
</dbReference>
<dbReference type="RNAct" id="Q9R155">
    <property type="molecule type" value="protein"/>
</dbReference>
<dbReference type="Bgee" id="ENSMUSG00000020651">
    <property type="expression patterns" value="Expressed in ciliary body and 50 other cell types or tissues"/>
</dbReference>
<dbReference type="GO" id="GO:0016324">
    <property type="term" value="C:apical plasma membrane"/>
    <property type="evidence" value="ECO:0000314"/>
    <property type="project" value="UniProtKB"/>
</dbReference>
<dbReference type="GO" id="GO:0031526">
    <property type="term" value="C:brush border membrane"/>
    <property type="evidence" value="ECO:0000314"/>
    <property type="project" value="UniProtKB"/>
</dbReference>
<dbReference type="GO" id="GO:0070062">
    <property type="term" value="C:extracellular exosome"/>
    <property type="evidence" value="ECO:0007669"/>
    <property type="project" value="Ensembl"/>
</dbReference>
<dbReference type="GO" id="GO:0016020">
    <property type="term" value="C:membrane"/>
    <property type="evidence" value="ECO:0000314"/>
    <property type="project" value="MGI"/>
</dbReference>
<dbReference type="GO" id="GO:0140900">
    <property type="term" value="F:chloride:bicarbonate antiporter activity"/>
    <property type="evidence" value="ECO:0000314"/>
    <property type="project" value="UniProtKB"/>
</dbReference>
<dbReference type="GO" id="GO:0015111">
    <property type="term" value="F:iodide transmembrane transporter activity"/>
    <property type="evidence" value="ECO:0007669"/>
    <property type="project" value="Ensembl"/>
</dbReference>
<dbReference type="GO" id="GO:0008509">
    <property type="term" value="F:monoatomic anion transmembrane transporter activity"/>
    <property type="evidence" value="ECO:0000250"/>
    <property type="project" value="MGI"/>
</dbReference>
<dbReference type="GO" id="GO:0008271">
    <property type="term" value="F:secondary active sulfate transmembrane transporter activity"/>
    <property type="evidence" value="ECO:0007669"/>
    <property type="project" value="InterPro"/>
</dbReference>
<dbReference type="GO" id="GO:0009887">
    <property type="term" value="P:animal organ morphogenesis"/>
    <property type="evidence" value="ECO:0000250"/>
    <property type="project" value="MGI"/>
</dbReference>
<dbReference type="GO" id="GO:0006885">
    <property type="term" value="P:regulation of pH"/>
    <property type="evidence" value="ECO:0000315"/>
    <property type="project" value="UniProtKB"/>
</dbReference>
<dbReference type="GO" id="GO:0032880">
    <property type="term" value="P:regulation of protein localization"/>
    <property type="evidence" value="ECO:0000315"/>
    <property type="project" value="UniProtKB"/>
</dbReference>
<dbReference type="CDD" id="cd07042">
    <property type="entry name" value="STAS_SulP_like_sulfate_transporter"/>
    <property type="match status" value="1"/>
</dbReference>
<dbReference type="Gene3D" id="3.30.750.24">
    <property type="entry name" value="STAS domain"/>
    <property type="match status" value="1"/>
</dbReference>
<dbReference type="InterPro" id="IPR018045">
    <property type="entry name" value="S04_transporter_CS"/>
</dbReference>
<dbReference type="InterPro" id="IPR011547">
    <property type="entry name" value="SLC26A/SulP_dom"/>
</dbReference>
<dbReference type="InterPro" id="IPR001902">
    <property type="entry name" value="SLC26A/SulP_fam"/>
</dbReference>
<dbReference type="InterPro" id="IPR002645">
    <property type="entry name" value="STAS_dom"/>
</dbReference>
<dbReference type="InterPro" id="IPR036513">
    <property type="entry name" value="STAS_dom_sf"/>
</dbReference>
<dbReference type="NCBIfam" id="TIGR00815">
    <property type="entry name" value="sulP"/>
    <property type="match status" value="1"/>
</dbReference>
<dbReference type="PANTHER" id="PTHR11814">
    <property type="entry name" value="SULFATE TRANSPORTER"/>
    <property type="match status" value="1"/>
</dbReference>
<dbReference type="Pfam" id="PF01740">
    <property type="entry name" value="STAS"/>
    <property type="match status" value="1"/>
</dbReference>
<dbReference type="Pfam" id="PF00916">
    <property type="entry name" value="Sulfate_transp"/>
    <property type="match status" value="1"/>
</dbReference>
<dbReference type="SUPFAM" id="SSF52091">
    <property type="entry name" value="SpoIIaa-like"/>
    <property type="match status" value="1"/>
</dbReference>
<dbReference type="PROSITE" id="PS01130">
    <property type="entry name" value="SLC26A"/>
    <property type="match status" value="1"/>
</dbReference>
<dbReference type="PROSITE" id="PS50801">
    <property type="entry name" value="STAS"/>
    <property type="match status" value="1"/>
</dbReference>
<accession>Q9R155</accession>